<dbReference type="EMBL" id="AJ312388">
    <property type="protein sequence ID" value="CAC42816.1"/>
    <property type="molecule type" value="mRNA"/>
</dbReference>
<dbReference type="EMBL" id="AAFI02000012">
    <property type="protein sequence ID" value="EAL69955.1"/>
    <property type="molecule type" value="Genomic_DNA"/>
</dbReference>
<dbReference type="RefSeq" id="XP_644080.1">
    <property type="nucleotide sequence ID" value="XM_638988.1"/>
</dbReference>
<dbReference type="SMR" id="Q95ZG8"/>
<dbReference type="IntAct" id="Q95ZG8">
    <property type="interactions" value="1"/>
</dbReference>
<dbReference type="STRING" id="44689.Q95ZG8"/>
<dbReference type="PaxDb" id="44689-DDB0185201"/>
<dbReference type="EnsemblProtists" id="EAL69955">
    <property type="protein sequence ID" value="EAL69955"/>
    <property type="gene ID" value="DDB_G0274125"/>
</dbReference>
<dbReference type="GeneID" id="8619509"/>
<dbReference type="KEGG" id="ddi:DDB_G0274125"/>
<dbReference type="dictyBase" id="DDB_G0274125">
    <property type="gene designation" value="gpgA"/>
</dbReference>
<dbReference type="VEuPathDB" id="AmoebaDB:DDB_G0274125"/>
<dbReference type="eggNOG" id="ENOG502RI9H">
    <property type="taxonomic scope" value="Eukaryota"/>
</dbReference>
<dbReference type="HOGENOM" id="CLU_2781199_0_0_1"/>
<dbReference type="InParanoid" id="Q95ZG8"/>
<dbReference type="OMA" id="ENEWTKP"/>
<dbReference type="PRO" id="PR:Q95ZG8"/>
<dbReference type="Proteomes" id="UP000002195">
    <property type="component" value="Chromosome 2"/>
</dbReference>
<dbReference type="GO" id="GO:0005829">
    <property type="term" value="C:cytosol"/>
    <property type="evidence" value="ECO:0000314"/>
    <property type="project" value="dictyBase"/>
</dbReference>
<dbReference type="GO" id="GO:0005834">
    <property type="term" value="C:heterotrimeric G-protein complex"/>
    <property type="evidence" value="ECO:0000314"/>
    <property type="project" value="dictyBase"/>
</dbReference>
<dbReference type="GO" id="GO:0005886">
    <property type="term" value="C:plasma membrane"/>
    <property type="evidence" value="ECO:0000314"/>
    <property type="project" value="dictyBase"/>
</dbReference>
<dbReference type="GO" id="GO:0008047">
    <property type="term" value="F:enzyme activator activity"/>
    <property type="evidence" value="ECO:0000304"/>
    <property type="project" value="dictyBase"/>
</dbReference>
<dbReference type="GO" id="GO:0031681">
    <property type="term" value="F:G-protein beta-subunit binding"/>
    <property type="evidence" value="ECO:0000314"/>
    <property type="project" value="dictyBase"/>
</dbReference>
<dbReference type="GO" id="GO:0031152">
    <property type="term" value="P:aggregation involved in sorocarp development"/>
    <property type="evidence" value="ECO:0000315"/>
    <property type="project" value="dictyBase"/>
</dbReference>
<dbReference type="GO" id="GO:0043327">
    <property type="term" value="P:chemotaxis to cAMP"/>
    <property type="evidence" value="ECO:0000315"/>
    <property type="project" value="dictyBase"/>
</dbReference>
<dbReference type="GO" id="GO:0007186">
    <property type="term" value="P:G protein-coupled receptor signaling pathway"/>
    <property type="evidence" value="ECO:0000318"/>
    <property type="project" value="GO_Central"/>
</dbReference>
<dbReference type="CDD" id="cd00068">
    <property type="entry name" value="GGL"/>
    <property type="match status" value="1"/>
</dbReference>
<dbReference type="Gene3D" id="4.10.260.10">
    <property type="entry name" value="Transducin (heterotrimeric G protein), gamma chain"/>
    <property type="match status" value="1"/>
</dbReference>
<dbReference type="InterPro" id="IPR015898">
    <property type="entry name" value="G-protein_gamma-like_dom"/>
</dbReference>
<dbReference type="InterPro" id="IPR036284">
    <property type="entry name" value="GGL_sf"/>
</dbReference>
<dbReference type="Pfam" id="PF00631">
    <property type="entry name" value="G-gamma"/>
    <property type="match status" value="1"/>
</dbReference>
<dbReference type="SMART" id="SM01224">
    <property type="entry name" value="G_gamma"/>
    <property type="match status" value="1"/>
</dbReference>
<dbReference type="SMART" id="SM00224">
    <property type="entry name" value="GGL"/>
    <property type="match status" value="1"/>
</dbReference>
<dbReference type="SUPFAM" id="SSF48670">
    <property type="entry name" value="Transducin (heterotrimeric G protein), gamma chain"/>
    <property type="match status" value="1"/>
</dbReference>
<evidence type="ECO:0000250" key="1"/>
<evidence type="ECO:0000269" key="2">
    <source>
    </source>
</evidence>
<evidence type="ECO:0000269" key="3">
    <source>
    </source>
</evidence>
<evidence type="ECO:0000303" key="4">
    <source>
    </source>
</evidence>
<evidence type="ECO:0000303" key="5">
    <source>
    </source>
</evidence>
<evidence type="ECO:0000305" key="6"/>
<evidence type="ECO:0000305" key="7">
    <source>
    </source>
</evidence>
<evidence type="ECO:0000305" key="8">
    <source>
    </source>
</evidence>
<sequence length="69" mass="7679">MSESQLKKVLKENETLKAQLEKSTTILKVSEACESLQDYCTKTSDPFIPGWSGENEWTKPLKGNGCSVL</sequence>
<name>GBG_DICDI</name>
<protein>
    <recommendedName>
        <fullName>Guanine nucleotide-binding protein subunit gamma</fullName>
    </recommendedName>
</protein>
<reference key="1">
    <citation type="journal article" date="2001" name="Mol. Biol. Cell">
        <title>Ggamma in dictyostelium: its role in localization of gbetagamma to the membrane is required for chemotaxis in shallow gradients.</title>
        <authorList>
            <person name="Zhang N."/>
            <person name="Long Y."/>
            <person name="Devreotes P.N."/>
        </authorList>
    </citation>
    <scope>NUCLEOTIDE SEQUENCE [MRNA]</scope>
    <scope>PROTEIN SEQUENCE OF 3-22</scope>
    <scope>FUNCTION</scope>
    <scope>DEVELOPMENTAL STAGE</scope>
    <scope>ISOPRENYLATION AT CYS-66</scope>
    <scope>MUTAGENESIS OF 66-CYS--SER-69</scope>
</reference>
<reference key="2">
    <citation type="journal article" date="2002" name="Nature">
        <title>Sequence and analysis of chromosome 2 of Dictyostelium discoideum.</title>
        <authorList>
            <person name="Gloeckner G."/>
            <person name="Eichinger L."/>
            <person name="Szafranski K."/>
            <person name="Pachebat J.A."/>
            <person name="Bankier A.T."/>
            <person name="Dear P.H."/>
            <person name="Lehmann R."/>
            <person name="Baumgart C."/>
            <person name="Parra G."/>
            <person name="Abril J.F."/>
            <person name="Guigo R."/>
            <person name="Kumpf K."/>
            <person name="Tunggal B."/>
            <person name="Cox E.C."/>
            <person name="Quail M.A."/>
            <person name="Platzer M."/>
            <person name="Rosenthal A."/>
            <person name="Noegel A.A."/>
        </authorList>
    </citation>
    <scope>NUCLEOTIDE SEQUENCE [LARGE SCALE GENOMIC DNA]</scope>
    <source>
        <strain>AX4</strain>
    </source>
</reference>
<reference key="3">
    <citation type="journal article" date="2005" name="Nature">
        <title>The genome of the social amoeba Dictyostelium discoideum.</title>
        <authorList>
            <person name="Eichinger L."/>
            <person name="Pachebat J.A."/>
            <person name="Gloeckner G."/>
            <person name="Rajandream M.A."/>
            <person name="Sucgang R."/>
            <person name="Berriman M."/>
            <person name="Song J."/>
            <person name="Olsen R."/>
            <person name="Szafranski K."/>
            <person name="Xu Q."/>
            <person name="Tunggal B."/>
            <person name="Kummerfeld S."/>
            <person name="Madera M."/>
            <person name="Konfortov B.A."/>
            <person name="Rivero F."/>
            <person name="Bankier A.T."/>
            <person name="Lehmann R."/>
            <person name="Hamlin N."/>
            <person name="Davies R."/>
            <person name="Gaudet P."/>
            <person name="Fey P."/>
            <person name="Pilcher K."/>
            <person name="Chen G."/>
            <person name="Saunders D."/>
            <person name="Sodergren E.J."/>
            <person name="Davis P."/>
            <person name="Kerhornou A."/>
            <person name="Nie X."/>
            <person name="Hall N."/>
            <person name="Anjard C."/>
            <person name="Hemphill L."/>
            <person name="Bason N."/>
            <person name="Farbrother P."/>
            <person name="Desany B."/>
            <person name="Just E."/>
            <person name="Morio T."/>
            <person name="Rost R."/>
            <person name="Churcher C.M."/>
            <person name="Cooper J."/>
            <person name="Haydock S."/>
            <person name="van Driessche N."/>
            <person name="Cronin A."/>
            <person name="Goodhead I."/>
            <person name="Muzny D.M."/>
            <person name="Mourier T."/>
            <person name="Pain A."/>
            <person name="Lu M."/>
            <person name="Harper D."/>
            <person name="Lindsay R."/>
            <person name="Hauser H."/>
            <person name="James K.D."/>
            <person name="Quiles M."/>
            <person name="Madan Babu M."/>
            <person name="Saito T."/>
            <person name="Buchrieser C."/>
            <person name="Wardroper A."/>
            <person name="Felder M."/>
            <person name="Thangavelu M."/>
            <person name="Johnson D."/>
            <person name="Knights A."/>
            <person name="Loulseged H."/>
            <person name="Mungall K.L."/>
            <person name="Oliver K."/>
            <person name="Price C."/>
            <person name="Quail M.A."/>
            <person name="Urushihara H."/>
            <person name="Hernandez J."/>
            <person name="Rabbinowitsch E."/>
            <person name="Steffen D."/>
            <person name="Sanders M."/>
            <person name="Ma J."/>
            <person name="Kohara Y."/>
            <person name="Sharp S."/>
            <person name="Simmonds M.N."/>
            <person name="Spiegler S."/>
            <person name="Tivey A."/>
            <person name="Sugano S."/>
            <person name="White B."/>
            <person name="Walker D."/>
            <person name="Woodward J.R."/>
            <person name="Winckler T."/>
            <person name="Tanaka Y."/>
            <person name="Shaulsky G."/>
            <person name="Schleicher M."/>
            <person name="Weinstock G.M."/>
            <person name="Rosenthal A."/>
            <person name="Cox E.C."/>
            <person name="Chisholm R.L."/>
            <person name="Gibbs R.A."/>
            <person name="Loomis W.F."/>
            <person name="Platzer M."/>
            <person name="Kay R.R."/>
            <person name="Williams J.G."/>
            <person name="Dear P.H."/>
            <person name="Noegel A.A."/>
            <person name="Barrell B.G."/>
            <person name="Kuspa A."/>
        </authorList>
    </citation>
    <scope>NUCLEOTIDE SEQUENCE [LARGE SCALE GENOMIC DNA]</scope>
    <source>
        <strain>AX4</strain>
    </source>
</reference>
<reference key="4">
    <citation type="journal article" date="2003" name="EMBO J.">
        <title>Phosducin-like proteins in Dictyostelium discoideum: implications for the phosducin family of proteins.</title>
        <authorList>
            <person name="Blaauw M."/>
            <person name="Knol J.C."/>
            <person name="Kortholt A."/>
            <person name="Roelofs J."/>
            <person name="Ruchira X."/>
            <person name="Postma M."/>
            <person name="Visser A.J.W.G."/>
            <person name="van Haastert P.J.M."/>
        </authorList>
    </citation>
    <scope>SUBCELLULAR LOCATION</scope>
</reference>
<reference key="5">
    <citation type="journal article" date="2005" name="Mol. Cell. Biol.">
        <title>The phosducin-like protein PhLP1 is essential for Gbetagamma dimer formation in Dictyostelium discoideum.</title>
        <authorList>
            <person name="Knol J.C."/>
            <person name="Engel R."/>
            <person name="Blaauw M."/>
            <person name="Visser A.J.W.G."/>
            <person name="van Haastert P.J.M."/>
        </authorList>
    </citation>
    <scope>INTERACTION WITH GPBA</scope>
    <scope>ISOPRENYLATION AT CYS-66</scope>
    <scope>METHYLATION AT CYS-66</scope>
    <scope>SUBCELLULAR LOCATION</scope>
</reference>
<organism>
    <name type="scientific">Dictyostelium discoideum</name>
    <name type="common">Social amoeba</name>
    <dbReference type="NCBI Taxonomy" id="44689"/>
    <lineage>
        <taxon>Eukaryota</taxon>
        <taxon>Amoebozoa</taxon>
        <taxon>Evosea</taxon>
        <taxon>Eumycetozoa</taxon>
        <taxon>Dictyostelia</taxon>
        <taxon>Dictyosteliales</taxon>
        <taxon>Dictyosteliaceae</taxon>
        <taxon>Dictyostelium</taxon>
    </lineage>
</organism>
<comment type="function">
    <text evidence="1 2">Guanine nucleotide-binding proteins (G proteins) are involved as a modulator or transducer in various transmembrane signaling systems. This major G-protein of the squid photoreceptor is involved in visual transduction. The beta and gamma chains are required for the GTPase activity, for replacement of GDP by GTP, and for G protein-effector interaction (By similarity). Required for normal chemotaxis in response to cAMP.</text>
</comment>
<comment type="subunit">
    <text evidence="3">G proteins are composed of 3 units, alpha, beta and gamma. Interacts with gpbA, and this requires phlp1.</text>
</comment>
<comment type="subcellular location">
    <subcellularLocation>
        <location evidence="7 8">Cell membrane</location>
        <topology evidence="7 8">Lipid-anchor</topology>
        <orientation evidence="7 8">Cytoplasmic side</orientation>
    </subcellularLocation>
</comment>
<comment type="developmental stage">
    <text evidence="2">Expressed in vegetative cells. Expression rises within 6 hours after the initiation of development and gradually decreases following the mound stage.</text>
</comment>
<comment type="PTM">
    <text evidence="3">This protein is thought to be subject to lipidation, and this requires phlp1.</text>
</comment>
<comment type="similarity">
    <text evidence="6">Belongs to the G protein gamma family.</text>
</comment>
<gene>
    <name type="primary">gpgA</name>
    <name type="synonym">gg</name>
    <name type="ORF">DDB_G0274125</name>
</gene>
<accession>Q95ZG8</accession>
<accession>Q556F4</accession>
<keyword id="KW-0007">Acetylation</keyword>
<keyword id="KW-1003">Cell membrane</keyword>
<keyword id="KW-0145">Chemotaxis</keyword>
<keyword id="KW-0903">Direct protein sequencing</keyword>
<keyword id="KW-0449">Lipoprotein</keyword>
<keyword id="KW-0472">Membrane</keyword>
<keyword id="KW-0488">Methylation</keyword>
<keyword id="KW-0636">Prenylation</keyword>
<keyword id="KW-1185">Reference proteome</keyword>
<keyword id="KW-0716">Sensory transduction</keyword>
<keyword id="KW-0807">Transducer</keyword>
<proteinExistence type="evidence at protein level"/>
<feature type="initiator methionine" description="Removed" evidence="1">
    <location>
        <position position="1"/>
    </location>
</feature>
<feature type="chain" id="PRO_0000315601" description="Guanine nucleotide-binding protein subunit gamma">
    <location>
        <begin position="2"/>
        <end position="66"/>
    </location>
</feature>
<feature type="propeptide" id="PRO_0000315602" description="Removed in mature form" evidence="1">
    <location>
        <begin position="67"/>
        <end position="69"/>
    </location>
</feature>
<feature type="modified residue" description="N-acetylserine" evidence="1">
    <location>
        <position position="2"/>
    </location>
</feature>
<feature type="modified residue" description="Cysteine methyl ester" evidence="5">
    <location>
        <position position="66"/>
    </location>
</feature>
<feature type="lipid moiety-binding region" description="S-geranylgeranyl cysteine" evidence="4 5">
    <location>
        <position position="66"/>
    </location>
</feature>
<feature type="mutagenesis site" description="Impairs membrane localization and cell aggregation." evidence="2">
    <location>
        <begin position="66"/>
        <end position="69"/>
    </location>
</feature>